<feature type="signal peptide" evidence="1">
    <location>
        <begin position="1"/>
        <end position="20"/>
    </location>
</feature>
<feature type="chain" id="PRO_5000345306" description="Outer membrane protein assembly factor BamA">
    <location>
        <begin position="21"/>
        <end position="795"/>
    </location>
</feature>
<feature type="domain" description="POTRA 1" evidence="2">
    <location>
        <begin position="24"/>
        <end position="91"/>
    </location>
</feature>
<feature type="domain" description="POTRA 2" evidence="2">
    <location>
        <begin position="92"/>
        <end position="172"/>
    </location>
</feature>
<feature type="domain" description="POTRA 3" evidence="2">
    <location>
        <begin position="175"/>
        <end position="263"/>
    </location>
</feature>
<feature type="domain" description="POTRA 4" evidence="2">
    <location>
        <begin position="266"/>
        <end position="344"/>
    </location>
</feature>
<feature type="domain" description="POTRA 5" evidence="2">
    <location>
        <begin position="347"/>
        <end position="421"/>
    </location>
</feature>
<name>BAMA_YERPB</name>
<evidence type="ECO:0000255" key="1">
    <source>
        <dbReference type="HAMAP-Rule" id="MF_01430"/>
    </source>
</evidence>
<evidence type="ECO:0000255" key="2">
    <source>
        <dbReference type="PROSITE-ProRule" id="PRU01115"/>
    </source>
</evidence>
<organism>
    <name type="scientific">Yersinia pseudotuberculosis serotype IB (strain PB1/+)</name>
    <dbReference type="NCBI Taxonomy" id="502801"/>
    <lineage>
        <taxon>Bacteria</taxon>
        <taxon>Pseudomonadati</taxon>
        <taxon>Pseudomonadota</taxon>
        <taxon>Gammaproteobacteria</taxon>
        <taxon>Enterobacterales</taxon>
        <taxon>Yersiniaceae</taxon>
        <taxon>Yersinia</taxon>
    </lineage>
</organism>
<gene>
    <name evidence="1" type="primary">bamA</name>
    <name type="synonym">yaeT</name>
    <name type="ordered locus">YPTS_3115</name>
</gene>
<sequence>MAMKKLLIASLLFGSATVYGADGFVVNDIHFEGLQRVAVGAALLNMPVRVGDTVSDDDIGKTIRALFATGNFEDVRVLRDGNTLIVQVKERPTIASITFSGNKAVKEDMLKQNLEASGVRVGEALDRTTISNIEKGLEDFYYSVGKYSASVKAVVTPLPRNRVDLKLVFTEGVSAKIQQINIVGNHSFTTDELISRFQLRDEVPWWNVVGDRKYQKQKLAGDLETLRSFYLDRGYARFNIDSTQVSLTPDKKGIYVTINITEGPQFKLNSVIVSGNLAGHQSEAEKLTKIEPGELFNGSKVTRMEDDIKKMLGRYGYAYPRVVTQPEINDDDKTVKLHINVDAGNRFYVRHIRFEGNDTSKDSVLRREMRQMEGAWLGNDQVEAGKERLNRLGYFETVDVETQRVPGAADLVDVTYKVKERNTGSLNFGIGYGTESGVSFQVGVQQDNWLGTGNTVGINGTKNDYQTYAEFTLMDPYFTVDGVSLGGRIFYNDFKADNADLSGYTNSSYGADGTLGFPINENNSLRVGVGYVHNDLSDMLPQVAMWRYLESVGERPGYDGREGFTTDDFTLNLGWTYNNLDRGFFPTSGVKSSVNTKITVPGSDNEFYKVTFDTSAYQPLNEDRSWVLLGRGRLGYGDGIGSKEMPFYENFYAGGSSTVRGFRSNNIGPKAAYYANGGATVTNSTDAVGGNAMAVASIELITPTPFISEKYSNSVRTSIFIDSGTVWDTNWENTAKTRAAGIPDYGKASNIRVSAGVALQWMSPLGPLVFSYAKPVKDYEGDKSEQFQFNIGKTW</sequence>
<reference key="1">
    <citation type="submission" date="2008-04" db="EMBL/GenBank/DDBJ databases">
        <title>Complete sequence of Yersinia pseudotuberculosis PB1/+.</title>
        <authorList>
            <person name="Copeland A."/>
            <person name="Lucas S."/>
            <person name="Lapidus A."/>
            <person name="Glavina del Rio T."/>
            <person name="Dalin E."/>
            <person name="Tice H."/>
            <person name="Bruce D."/>
            <person name="Goodwin L."/>
            <person name="Pitluck S."/>
            <person name="Munk A.C."/>
            <person name="Brettin T."/>
            <person name="Detter J.C."/>
            <person name="Han C."/>
            <person name="Tapia R."/>
            <person name="Schmutz J."/>
            <person name="Larimer F."/>
            <person name="Land M."/>
            <person name="Hauser L."/>
            <person name="Challacombe J.F."/>
            <person name="Green L."/>
            <person name="Lindler L.E."/>
            <person name="Nikolich M.P."/>
            <person name="Richardson P."/>
        </authorList>
    </citation>
    <scope>NUCLEOTIDE SEQUENCE [LARGE SCALE GENOMIC DNA]</scope>
    <source>
        <strain>PB1/+</strain>
    </source>
</reference>
<keyword id="KW-0998">Cell outer membrane</keyword>
<keyword id="KW-0472">Membrane</keyword>
<keyword id="KW-0677">Repeat</keyword>
<keyword id="KW-0732">Signal</keyword>
<keyword id="KW-0812">Transmembrane</keyword>
<keyword id="KW-1134">Transmembrane beta strand</keyword>
<proteinExistence type="inferred from homology"/>
<comment type="function">
    <text evidence="1">Part of the outer membrane protein assembly complex, which is involved in assembly and insertion of beta-barrel proteins into the outer membrane. Constitutes, with BamD, the core component of the assembly machinery.</text>
</comment>
<comment type="subunit">
    <text evidence="1">Part of the Bam complex, which is composed of the outer membrane protein BamA, and four lipoproteins BamB, BamC, BamD and BamE.</text>
</comment>
<comment type="subcellular location">
    <subcellularLocation>
        <location evidence="1">Cell outer membrane</location>
    </subcellularLocation>
</comment>
<comment type="similarity">
    <text evidence="1">Belongs to the BamA family.</text>
</comment>
<dbReference type="EMBL" id="CP001048">
    <property type="protein sequence ID" value="ACC90070.1"/>
    <property type="molecule type" value="Genomic_DNA"/>
</dbReference>
<dbReference type="RefSeq" id="WP_002212139.1">
    <property type="nucleotide sequence ID" value="NZ_CP009780.1"/>
</dbReference>
<dbReference type="SMR" id="B2JZ26"/>
<dbReference type="GeneID" id="57977509"/>
<dbReference type="KEGG" id="ypb:YPTS_3115"/>
<dbReference type="PATRIC" id="fig|502801.10.peg.2547"/>
<dbReference type="GO" id="GO:1990063">
    <property type="term" value="C:Bam protein complex"/>
    <property type="evidence" value="ECO:0007669"/>
    <property type="project" value="TreeGrafter"/>
</dbReference>
<dbReference type="GO" id="GO:0043165">
    <property type="term" value="P:Gram-negative-bacterium-type cell outer membrane assembly"/>
    <property type="evidence" value="ECO:0007669"/>
    <property type="project" value="UniProtKB-UniRule"/>
</dbReference>
<dbReference type="GO" id="GO:0051205">
    <property type="term" value="P:protein insertion into membrane"/>
    <property type="evidence" value="ECO:0007669"/>
    <property type="project" value="UniProtKB-UniRule"/>
</dbReference>
<dbReference type="FunFam" id="2.40.160.50:FF:000001">
    <property type="entry name" value="Outer membrane protein assembly factor BamA"/>
    <property type="match status" value="1"/>
</dbReference>
<dbReference type="FunFam" id="3.10.20.310:FF:000001">
    <property type="entry name" value="Outer membrane protein assembly factor BamA"/>
    <property type="match status" value="1"/>
</dbReference>
<dbReference type="FunFam" id="3.10.20.310:FF:000002">
    <property type="entry name" value="Outer membrane protein assembly factor BamA"/>
    <property type="match status" value="1"/>
</dbReference>
<dbReference type="FunFam" id="3.10.20.310:FF:000003">
    <property type="entry name" value="Outer membrane protein assembly factor BamA"/>
    <property type="match status" value="1"/>
</dbReference>
<dbReference type="FunFam" id="3.10.20.310:FF:000004">
    <property type="entry name" value="Outer membrane protein assembly factor BamA"/>
    <property type="match status" value="1"/>
</dbReference>
<dbReference type="FunFam" id="3.10.20.310:FF:000005">
    <property type="entry name" value="Outer membrane protein assembly factor BamA"/>
    <property type="match status" value="1"/>
</dbReference>
<dbReference type="Gene3D" id="3.10.20.310">
    <property type="entry name" value="membrane protein fhac"/>
    <property type="match status" value="5"/>
</dbReference>
<dbReference type="Gene3D" id="2.40.160.50">
    <property type="entry name" value="membrane protein fhac: a member of the omp85/tpsb transporter family"/>
    <property type="match status" value="1"/>
</dbReference>
<dbReference type="HAMAP" id="MF_01430">
    <property type="entry name" value="OM_assembly_BamA"/>
    <property type="match status" value="1"/>
</dbReference>
<dbReference type="InterPro" id="IPR000184">
    <property type="entry name" value="Bac_surfAg_D15"/>
</dbReference>
<dbReference type="InterPro" id="IPR010827">
    <property type="entry name" value="BamA/TamA_POTRA"/>
</dbReference>
<dbReference type="InterPro" id="IPR039910">
    <property type="entry name" value="D15-like"/>
</dbReference>
<dbReference type="InterPro" id="IPR023707">
    <property type="entry name" value="OM_assembly_BamA"/>
</dbReference>
<dbReference type="InterPro" id="IPR034746">
    <property type="entry name" value="POTRA"/>
</dbReference>
<dbReference type="NCBIfam" id="TIGR03303">
    <property type="entry name" value="OM_YaeT"/>
    <property type="match status" value="1"/>
</dbReference>
<dbReference type="NCBIfam" id="NF008287">
    <property type="entry name" value="PRK11067.1"/>
    <property type="match status" value="1"/>
</dbReference>
<dbReference type="PANTHER" id="PTHR12815:SF23">
    <property type="entry name" value="OUTER MEMBRANE PROTEIN ASSEMBLY FACTOR BAMA"/>
    <property type="match status" value="1"/>
</dbReference>
<dbReference type="PANTHER" id="PTHR12815">
    <property type="entry name" value="SORTING AND ASSEMBLY MACHINERY SAMM50 PROTEIN FAMILY MEMBER"/>
    <property type="match status" value="1"/>
</dbReference>
<dbReference type="Pfam" id="PF01103">
    <property type="entry name" value="Omp85"/>
    <property type="match status" value="1"/>
</dbReference>
<dbReference type="Pfam" id="PF07244">
    <property type="entry name" value="POTRA"/>
    <property type="match status" value="4"/>
</dbReference>
<dbReference type="PIRSF" id="PIRSF006076">
    <property type="entry name" value="OM_assembly_OMP85"/>
    <property type="match status" value="1"/>
</dbReference>
<dbReference type="PROSITE" id="PS51779">
    <property type="entry name" value="POTRA"/>
    <property type="match status" value="5"/>
</dbReference>
<accession>B2JZ26</accession>
<protein>
    <recommendedName>
        <fullName evidence="1">Outer membrane protein assembly factor BamA</fullName>
    </recommendedName>
</protein>